<organism>
    <name type="scientific">Synechococcus sp. (strain JA-3-3Ab)</name>
    <name type="common">Cyanobacteria bacterium Yellowstone A-Prime</name>
    <dbReference type="NCBI Taxonomy" id="321327"/>
    <lineage>
        <taxon>Bacteria</taxon>
        <taxon>Bacillati</taxon>
        <taxon>Cyanobacteriota</taxon>
        <taxon>Cyanophyceae</taxon>
        <taxon>Synechococcales</taxon>
        <taxon>Synechococcaceae</taxon>
        <taxon>Synechococcus</taxon>
    </lineage>
</organism>
<dbReference type="EC" id="2.6.1.9" evidence="1"/>
<dbReference type="EMBL" id="CP000239">
    <property type="protein sequence ID" value="ABD00032.1"/>
    <property type="molecule type" value="Genomic_DNA"/>
</dbReference>
<dbReference type="RefSeq" id="WP_011430707.1">
    <property type="nucleotide sequence ID" value="NC_007775.1"/>
</dbReference>
<dbReference type="SMR" id="Q2JTG5"/>
<dbReference type="STRING" id="321327.CYA_1885"/>
<dbReference type="KEGG" id="cya:CYA_1885"/>
<dbReference type="eggNOG" id="COG0079">
    <property type="taxonomic scope" value="Bacteria"/>
</dbReference>
<dbReference type="HOGENOM" id="CLU_017584_3_1_3"/>
<dbReference type="OrthoDB" id="9813612at2"/>
<dbReference type="UniPathway" id="UPA00031">
    <property type="reaction ID" value="UER00012"/>
</dbReference>
<dbReference type="Proteomes" id="UP000008818">
    <property type="component" value="Chromosome"/>
</dbReference>
<dbReference type="GO" id="GO:0004400">
    <property type="term" value="F:histidinol-phosphate transaminase activity"/>
    <property type="evidence" value="ECO:0007669"/>
    <property type="project" value="UniProtKB-UniRule"/>
</dbReference>
<dbReference type="GO" id="GO:0030170">
    <property type="term" value="F:pyridoxal phosphate binding"/>
    <property type="evidence" value="ECO:0007669"/>
    <property type="project" value="InterPro"/>
</dbReference>
<dbReference type="GO" id="GO:0000105">
    <property type="term" value="P:L-histidine biosynthetic process"/>
    <property type="evidence" value="ECO:0007669"/>
    <property type="project" value="UniProtKB-UniRule"/>
</dbReference>
<dbReference type="CDD" id="cd00609">
    <property type="entry name" value="AAT_like"/>
    <property type="match status" value="1"/>
</dbReference>
<dbReference type="Gene3D" id="3.90.1150.10">
    <property type="entry name" value="Aspartate Aminotransferase, domain 1"/>
    <property type="match status" value="1"/>
</dbReference>
<dbReference type="Gene3D" id="3.40.640.10">
    <property type="entry name" value="Type I PLP-dependent aspartate aminotransferase-like (Major domain)"/>
    <property type="match status" value="1"/>
</dbReference>
<dbReference type="HAMAP" id="MF_01023">
    <property type="entry name" value="HisC_aminotrans_2"/>
    <property type="match status" value="1"/>
</dbReference>
<dbReference type="InterPro" id="IPR004839">
    <property type="entry name" value="Aminotransferase_I/II_large"/>
</dbReference>
<dbReference type="InterPro" id="IPR005861">
    <property type="entry name" value="HisP_aminotrans"/>
</dbReference>
<dbReference type="InterPro" id="IPR050106">
    <property type="entry name" value="HistidinolP_aminotransfase"/>
</dbReference>
<dbReference type="InterPro" id="IPR015424">
    <property type="entry name" value="PyrdxlP-dep_Trfase"/>
</dbReference>
<dbReference type="InterPro" id="IPR015421">
    <property type="entry name" value="PyrdxlP-dep_Trfase_major"/>
</dbReference>
<dbReference type="InterPro" id="IPR015422">
    <property type="entry name" value="PyrdxlP-dep_Trfase_small"/>
</dbReference>
<dbReference type="NCBIfam" id="TIGR01141">
    <property type="entry name" value="hisC"/>
    <property type="match status" value="1"/>
</dbReference>
<dbReference type="NCBIfam" id="NF002726">
    <property type="entry name" value="PRK02610.1"/>
    <property type="match status" value="1"/>
</dbReference>
<dbReference type="PANTHER" id="PTHR43643:SF6">
    <property type="entry name" value="HISTIDINOL-PHOSPHATE AMINOTRANSFERASE"/>
    <property type="match status" value="1"/>
</dbReference>
<dbReference type="PANTHER" id="PTHR43643">
    <property type="entry name" value="HISTIDINOL-PHOSPHATE AMINOTRANSFERASE 2"/>
    <property type="match status" value="1"/>
</dbReference>
<dbReference type="Pfam" id="PF00155">
    <property type="entry name" value="Aminotran_1_2"/>
    <property type="match status" value="1"/>
</dbReference>
<dbReference type="SUPFAM" id="SSF53383">
    <property type="entry name" value="PLP-dependent transferases"/>
    <property type="match status" value="1"/>
</dbReference>
<sequence>MCALRYLRPDLLHLKPYDAVPPQAADKLDANEFPWDWPVGFKQKLSLLWEKGIPSNRYPDAHHQGLKQAIAAYAGADPAQISLGNGSDELIRSLLIATCVGERGSVLVAEPTFSMYAILAQSLGIPVVRVPRHPETFALDLGRCQQAVAEQRVRVVCLVDPNSPTGNGLSTAEWEWVEGLPAEILVILDEAYFEFSQHTALPKLAEHPNWVILRTFSKAFRLAAHRVGYAIGHPQLIQVLDSIRLPYNLSAISQWAVQIALEHAEEFLADLPLIRQERDALYQALQELPGVRVWPSQANFLYFRVAGWDPQDLQRAWQELGTCVRCTGGGLRLTVGTPEENQRALERLRQILR</sequence>
<reference key="1">
    <citation type="journal article" date="2007" name="ISME J.">
        <title>Population level functional diversity in a microbial community revealed by comparative genomic and metagenomic analyses.</title>
        <authorList>
            <person name="Bhaya D."/>
            <person name="Grossman A.R."/>
            <person name="Steunou A.-S."/>
            <person name="Khuri N."/>
            <person name="Cohan F.M."/>
            <person name="Hamamura N."/>
            <person name="Melendrez M.C."/>
            <person name="Bateson M.M."/>
            <person name="Ward D.M."/>
            <person name="Heidelberg J.F."/>
        </authorList>
    </citation>
    <scope>NUCLEOTIDE SEQUENCE [LARGE SCALE GENOMIC DNA]</scope>
    <source>
        <strain>JA-3-3Ab</strain>
    </source>
</reference>
<comment type="catalytic activity">
    <reaction evidence="1">
        <text>L-histidinol phosphate + 2-oxoglutarate = 3-(imidazol-4-yl)-2-oxopropyl phosphate + L-glutamate</text>
        <dbReference type="Rhea" id="RHEA:23744"/>
        <dbReference type="ChEBI" id="CHEBI:16810"/>
        <dbReference type="ChEBI" id="CHEBI:29985"/>
        <dbReference type="ChEBI" id="CHEBI:57766"/>
        <dbReference type="ChEBI" id="CHEBI:57980"/>
        <dbReference type="EC" id="2.6.1.9"/>
    </reaction>
</comment>
<comment type="cofactor">
    <cofactor evidence="1">
        <name>pyridoxal 5'-phosphate</name>
        <dbReference type="ChEBI" id="CHEBI:597326"/>
    </cofactor>
</comment>
<comment type="pathway">
    <text evidence="1">Amino-acid biosynthesis; L-histidine biosynthesis; L-histidine from 5-phospho-alpha-D-ribose 1-diphosphate: step 7/9.</text>
</comment>
<comment type="subunit">
    <text evidence="1">Homodimer.</text>
</comment>
<comment type="similarity">
    <text evidence="1">Belongs to the class-II pyridoxal-phosphate-dependent aminotransferase family. Histidinol-phosphate aminotransferase subfamily.</text>
</comment>
<accession>Q2JTG5</accession>
<proteinExistence type="inferred from homology"/>
<evidence type="ECO:0000255" key="1">
    <source>
        <dbReference type="HAMAP-Rule" id="MF_01023"/>
    </source>
</evidence>
<feature type="chain" id="PRO_0000319792" description="Histidinol-phosphate aminotransferase">
    <location>
        <begin position="1"/>
        <end position="353"/>
    </location>
</feature>
<feature type="modified residue" description="N6-(pyridoxal phosphate)lysine" evidence="1">
    <location>
        <position position="218"/>
    </location>
</feature>
<name>HIS8_SYNJA</name>
<gene>
    <name evidence="1" type="primary">hisC</name>
    <name type="ordered locus">CYA_1885</name>
</gene>
<protein>
    <recommendedName>
        <fullName evidence="1">Histidinol-phosphate aminotransferase</fullName>
        <ecNumber evidence="1">2.6.1.9</ecNumber>
    </recommendedName>
    <alternativeName>
        <fullName evidence="1">Imidazole acetol-phosphate transaminase</fullName>
    </alternativeName>
</protein>
<keyword id="KW-0028">Amino-acid biosynthesis</keyword>
<keyword id="KW-0032">Aminotransferase</keyword>
<keyword id="KW-0368">Histidine biosynthesis</keyword>
<keyword id="KW-0663">Pyridoxal phosphate</keyword>
<keyword id="KW-0808">Transferase</keyword>